<accession>Q21W25</accession>
<gene>
    <name evidence="1" type="primary">rlmN</name>
    <name type="ordered locus">Rfer_2310</name>
</gene>
<sequence length="382" mass="42755">MTANLLDFDLDGLAVFCERLGEKRYRAVQLFRWIHQKGASNFDDMSDLAKSLREKLKVSAQVKAPDLISQHISSDGTIKWLFDVGGGDAVEAVFIPEEDRGTLCISSQAGCAMGCRFCSTGHQGFSRNLKTGEIIAQLWFAEHFLRKHLQRDERVISNVVMMGMGEPLQNYAELVPALRAMLDDHGYGLSRRRVTVSTSGVVPMMDRLARDCPVALAVSLHAPNDLLRDDLVPLNKKYSLAELLNACNRYLAYAPRDFITFEYCMLEDVNDQPEHAQQLVRLVQHYSSGGVWCKFNLIPFNPFPASGLTRSTPERIQAFAKILSDAGIVTTIRKTRGDDIDAACGQLAGEVKDRTRVGERIARQRTFMLKPVSEINTQVKEN</sequence>
<keyword id="KW-0004">4Fe-4S</keyword>
<keyword id="KW-0963">Cytoplasm</keyword>
<keyword id="KW-1015">Disulfide bond</keyword>
<keyword id="KW-0408">Iron</keyword>
<keyword id="KW-0411">Iron-sulfur</keyword>
<keyword id="KW-0479">Metal-binding</keyword>
<keyword id="KW-0489">Methyltransferase</keyword>
<keyword id="KW-1185">Reference proteome</keyword>
<keyword id="KW-0698">rRNA processing</keyword>
<keyword id="KW-0949">S-adenosyl-L-methionine</keyword>
<keyword id="KW-0808">Transferase</keyword>
<keyword id="KW-0819">tRNA processing</keyword>
<comment type="function">
    <text evidence="1">Specifically methylates position 2 of adenine 2503 in 23S rRNA and position 2 of adenine 37 in tRNAs. m2A2503 modification seems to play a crucial role in the proofreading step occurring at the peptidyl transferase center and thus would serve to optimize ribosomal fidelity.</text>
</comment>
<comment type="catalytic activity">
    <reaction evidence="1">
        <text>adenosine(2503) in 23S rRNA + 2 reduced [2Fe-2S]-[ferredoxin] + 2 S-adenosyl-L-methionine = 2-methyladenosine(2503) in 23S rRNA + 5'-deoxyadenosine + L-methionine + 2 oxidized [2Fe-2S]-[ferredoxin] + S-adenosyl-L-homocysteine</text>
        <dbReference type="Rhea" id="RHEA:42916"/>
        <dbReference type="Rhea" id="RHEA-COMP:10000"/>
        <dbReference type="Rhea" id="RHEA-COMP:10001"/>
        <dbReference type="Rhea" id="RHEA-COMP:10152"/>
        <dbReference type="Rhea" id="RHEA-COMP:10282"/>
        <dbReference type="ChEBI" id="CHEBI:17319"/>
        <dbReference type="ChEBI" id="CHEBI:33737"/>
        <dbReference type="ChEBI" id="CHEBI:33738"/>
        <dbReference type="ChEBI" id="CHEBI:57844"/>
        <dbReference type="ChEBI" id="CHEBI:57856"/>
        <dbReference type="ChEBI" id="CHEBI:59789"/>
        <dbReference type="ChEBI" id="CHEBI:74411"/>
        <dbReference type="ChEBI" id="CHEBI:74497"/>
        <dbReference type="EC" id="2.1.1.192"/>
    </reaction>
</comment>
<comment type="catalytic activity">
    <reaction evidence="1">
        <text>adenosine(37) in tRNA + 2 reduced [2Fe-2S]-[ferredoxin] + 2 S-adenosyl-L-methionine = 2-methyladenosine(37) in tRNA + 5'-deoxyadenosine + L-methionine + 2 oxidized [2Fe-2S]-[ferredoxin] + S-adenosyl-L-homocysteine</text>
        <dbReference type="Rhea" id="RHEA:43332"/>
        <dbReference type="Rhea" id="RHEA-COMP:10000"/>
        <dbReference type="Rhea" id="RHEA-COMP:10001"/>
        <dbReference type="Rhea" id="RHEA-COMP:10162"/>
        <dbReference type="Rhea" id="RHEA-COMP:10485"/>
        <dbReference type="ChEBI" id="CHEBI:17319"/>
        <dbReference type="ChEBI" id="CHEBI:33737"/>
        <dbReference type="ChEBI" id="CHEBI:33738"/>
        <dbReference type="ChEBI" id="CHEBI:57844"/>
        <dbReference type="ChEBI" id="CHEBI:57856"/>
        <dbReference type="ChEBI" id="CHEBI:59789"/>
        <dbReference type="ChEBI" id="CHEBI:74411"/>
        <dbReference type="ChEBI" id="CHEBI:74497"/>
        <dbReference type="EC" id="2.1.1.192"/>
    </reaction>
</comment>
<comment type="cofactor">
    <cofactor evidence="1">
        <name>[4Fe-4S] cluster</name>
        <dbReference type="ChEBI" id="CHEBI:49883"/>
    </cofactor>
    <text evidence="1">Binds 1 [4Fe-4S] cluster. The cluster is coordinated with 3 cysteines and an exchangeable S-adenosyl-L-methionine.</text>
</comment>
<comment type="subcellular location">
    <subcellularLocation>
        <location evidence="1">Cytoplasm</location>
    </subcellularLocation>
</comment>
<comment type="miscellaneous">
    <text evidence="1">Reaction proceeds by a ping-pong mechanism involving intermediate methylation of a conserved cysteine residue.</text>
</comment>
<comment type="similarity">
    <text evidence="1">Belongs to the radical SAM superfamily. RlmN family.</text>
</comment>
<dbReference type="EC" id="2.1.1.192" evidence="1"/>
<dbReference type="EMBL" id="CP000267">
    <property type="protein sequence ID" value="ABD70028.1"/>
    <property type="molecule type" value="Genomic_DNA"/>
</dbReference>
<dbReference type="RefSeq" id="WP_011464596.1">
    <property type="nucleotide sequence ID" value="NC_007908.1"/>
</dbReference>
<dbReference type="SMR" id="Q21W25"/>
<dbReference type="STRING" id="338969.Rfer_2310"/>
<dbReference type="KEGG" id="rfr:Rfer_2310"/>
<dbReference type="eggNOG" id="COG0820">
    <property type="taxonomic scope" value="Bacteria"/>
</dbReference>
<dbReference type="HOGENOM" id="CLU_029101_0_0_4"/>
<dbReference type="OrthoDB" id="9793973at2"/>
<dbReference type="Proteomes" id="UP000008332">
    <property type="component" value="Chromosome"/>
</dbReference>
<dbReference type="GO" id="GO:0005737">
    <property type="term" value="C:cytoplasm"/>
    <property type="evidence" value="ECO:0007669"/>
    <property type="project" value="UniProtKB-SubCell"/>
</dbReference>
<dbReference type="GO" id="GO:0051539">
    <property type="term" value="F:4 iron, 4 sulfur cluster binding"/>
    <property type="evidence" value="ECO:0007669"/>
    <property type="project" value="UniProtKB-UniRule"/>
</dbReference>
<dbReference type="GO" id="GO:0046872">
    <property type="term" value="F:metal ion binding"/>
    <property type="evidence" value="ECO:0007669"/>
    <property type="project" value="UniProtKB-KW"/>
</dbReference>
<dbReference type="GO" id="GO:0070040">
    <property type="term" value="F:rRNA (adenine(2503)-C2-)-methyltransferase activity"/>
    <property type="evidence" value="ECO:0007669"/>
    <property type="project" value="UniProtKB-UniRule"/>
</dbReference>
<dbReference type="GO" id="GO:0019843">
    <property type="term" value="F:rRNA binding"/>
    <property type="evidence" value="ECO:0007669"/>
    <property type="project" value="UniProtKB-UniRule"/>
</dbReference>
<dbReference type="GO" id="GO:0002935">
    <property type="term" value="F:tRNA (adenine(37)-C2)-methyltransferase activity"/>
    <property type="evidence" value="ECO:0007669"/>
    <property type="project" value="UniProtKB-UniRule"/>
</dbReference>
<dbReference type="GO" id="GO:0000049">
    <property type="term" value="F:tRNA binding"/>
    <property type="evidence" value="ECO:0007669"/>
    <property type="project" value="UniProtKB-UniRule"/>
</dbReference>
<dbReference type="GO" id="GO:0070475">
    <property type="term" value="P:rRNA base methylation"/>
    <property type="evidence" value="ECO:0007669"/>
    <property type="project" value="UniProtKB-UniRule"/>
</dbReference>
<dbReference type="GO" id="GO:0030488">
    <property type="term" value="P:tRNA methylation"/>
    <property type="evidence" value="ECO:0007669"/>
    <property type="project" value="UniProtKB-UniRule"/>
</dbReference>
<dbReference type="CDD" id="cd01335">
    <property type="entry name" value="Radical_SAM"/>
    <property type="match status" value="1"/>
</dbReference>
<dbReference type="FunFam" id="1.10.150.530:FF:000003">
    <property type="entry name" value="Dual-specificity RNA methyltransferase RlmN"/>
    <property type="match status" value="1"/>
</dbReference>
<dbReference type="FunFam" id="3.20.20.70:FF:000008">
    <property type="entry name" value="Dual-specificity RNA methyltransferase RlmN"/>
    <property type="match status" value="1"/>
</dbReference>
<dbReference type="Gene3D" id="1.10.150.530">
    <property type="match status" value="1"/>
</dbReference>
<dbReference type="Gene3D" id="3.20.20.70">
    <property type="entry name" value="Aldolase class I"/>
    <property type="match status" value="1"/>
</dbReference>
<dbReference type="HAMAP" id="MF_01849">
    <property type="entry name" value="RNA_methyltr_RlmN"/>
    <property type="match status" value="1"/>
</dbReference>
<dbReference type="InterPro" id="IPR013785">
    <property type="entry name" value="Aldolase_TIM"/>
</dbReference>
<dbReference type="InterPro" id="IPR040072">
    <property type="entry name" value="Methyltransferase_A"/>
</dbReference>
<dbReference type="InterPro" id="IPR048641">
    <property type="entry name" value="RlmN_N"/>
</dbReference>
<dbReference type="InterPro" id="IPR027492">
    <property type="entry name" value="RNA_MTrfase_RlmN"/>
</dbReference>
<dbReference type="InterPro" id="IPR004383">
    <property type="entry name" value="rRNA_lsu_MTrfase_RlmN/Cfr"/>
</dbReference>
<dbReference type="InterPro" id="IPR007197">
    <property type="entry name" value="rSAM"/>
</dbReference>
<dbReference type="NCBIfam" id="TIGR00048">
    <property type="entry name" value="rRNA_mod_RlmN"/>
    <property type="match status" value="1"/>
</dbReference>
<dbReference type="PANTHER" id="PTHR30544">
    <property type="entry name" value="23S RRNA METHYLTRANSFERASE"/>
    <property type="match status" value="1"/>
</dbReference>
<dbReference type="PANTHER" id="PTHR30544:SF5">
    <property type="entry name" value="RADICAL SAM CORE DOMAIN-CONTAINING PROTEIN"/>
    <property type="match status" value="1"/>
</dbReference>
<dbReference type="Pfam" id="PF04055">
    <property type="entry name" value="Radical_SAM"/>
    <property type="match status" value="1"/>
</dbReference>
<dbReference type="Pfam" id="PF21016">
    <property type="entry name" value="RlmN_N"/>
    <property type="match status" value="1"/>
</dbReference>
<dbReference type="PIRSF" id="PIRSF006004">
    <property type="entry name" value="CHP00048"/>
    <property type="match status" value="1"/>
</dbReference>
<dbReference type="SFLD" id="SFLDF00275">
    <property type="entry name" value="adenosine_C2_methyltransferase"/>
    <property type="match status" value="1"/>
</dbReference>
<dbReference type="SFLD" id="SFLDS00029">
    <property type="entry name" value="Radical_SAM"/>
    <property type="match status" value="1"/>
</dbReference>
<dbReference type="SUPFAM" id="SSF102114">
    <property type="entry name" value="Radical SAM enzymes"/>
    <property type="match status" value="1"/>
</dbReference>
<dbReference type="PROSITE" id="PS51918">
    <property type="entry name" value="RADICAL_SAM"/>
    <property type="match status" value="1"/>
</dbReference>
<reference key="1">
    <citation type="submission" date="2006-02" db="EMBL/GenBank/DDBJ databases">
        <title>Complete sequence of chromosome of Rhodoferax ferrireducens DSM 15236.</title>
        <authorList>
            <person name="Copeland A."/>
            <person name="Lucas S."/>
            <person name="Lapidus A."/>
            <person name="Barry K."/>
            <person name="Detter J.C."/>
            <person name="Glavina del Rio T."/>
            <person name="Hammon N."/>
            <person name="Israni S."/>
            <person name="Pitluck S."/>
            <person name="Brettin T."/>
            <person name="Bruce D."/>
            <person name="Han C."/>
            <person name="Tapia R."/>
            <person name="Gilna P."/>
            <person name="Kiss H."/>
            <person name="Schmutz J."/>
            <person name="Larimer F."/>
            <person name="Land M."/>
            <person name="Kyrpides N."/>
            <person name="Ivanova N."/>
            <person name="Richardson P."/>
        </authorList>
    </citation>
    <scope>NUCLEOTIDE SEQUENCE [LARGE SCALE GENOMIC DNA]</scope>
    <source>
        <strain>ATCC BAA-621 / DSM 15236 / T118</strain>
    </source>
</reference>
<proteinExistence type="inferred from homology"/>
<name>RLMN_ALBFT</name>
<protein>
    <recommendedName>
        <fullName evidence="1">Dual-specificity RNA methyltransferase RlmN</fullName>
        <ecNumber evidence="1">2.1.1.192</ecNumber>
    </recommendedName>
    <alternativeName>
        <fullName evidence="1">23S rRNA (adenine(2503)-C(2))-methyltransferase</fullName>
    </alternativeName>
    <alternativeName>
        <fullName evidence="1">23S rRNA m2A2503 methyltransferase</fullName>
    </alternativeName>
    <alternativeName>
        <fullName evidence="1">Ribosomal RNA large subunit methyltransferase N</fullName>
    </alternativeName>
    <alternativeName>
        <fullName evidence="1">tRNA (adenine(37)-C(2))-methyltransferase</fullName>
    </alternativeName>
    <alternativeName>
        <fullName evidence="1">tRNA m2A37 methyltransferase</fullName>
    </alternativeName>
</protein>
<evidence type="ECO:0000255" key="1">
    <source>
        <dbReference type="HAMAP-Rule" id="MF_01849"/>
    </source>
</evidence>
<evidence type="ECO:0000255" key="2">
    <source>
        <dbReference type="PROSITE-ProRule" id="PRU01266"/>
    </source>
</evidence>
<feature type="chain" id="PRO_0000350365" description="Dual-specificity RNA methyltransferase RlmN">
    <location>
        <begin position="1"/>
        <end position="382"/>
    </location>
</feature>
<feature type="domain" description="Radical SAM core" evidence="2">
    <location>
        <begin position="97"/>
        <end position="339"/>
    </location>
</feature>
<feature type="active site" description="Proton acceptor" evidence="1">
    <location>
        <position position="91"/>
    </location>
</feature>
<feature type="active site" description="S-methylcysteine intermediate" evidence="1">
    <location>
        <position position="344"/>
    </location>
</feature>
<feature type="binding site" evidence="1">
    <location>
        <position position="111"/>
    </location>
    <ligand>
        <name>[4Fe-4S] cluster</name>
        <dbReference type="ChEBI" id="CHEBI:49883"/>
        <note>4Fe-4S-S-AdoMet</note>
    </ligand>
</feature>
<feature type="binding site" evidence="1">
    <location>
        <position position="115"/>
    </location>
    <ligand>
        <name>[4Fe-4S] cluster</name>
        <dbReference type="ChEBI" id="CHEBI:49883"/>
        <note>4Fe-4S-S-AdoMet</note>
    </ligand>
</feature>
<feature type="binding site" evidence="1">
    <location>
        <position position="118"/>
    </location>
    <ligand>
        <name>[4Fe-4S] cluster</name>
        <dbReference type="ChEBI" id="CHEBI:49883"/>
        <note>4Fe-4S-S-AdoMet</note>
    </ligand>
</feature>
<feature type="binding site" evidence="1">
    <location>
        <begin position="165"/>
        <end position="166"/>
    </location>
    <ligand>
        <name>S-adenosyl-L-methionine</name>
        <dbReference type="ChEBI" id="CHEBI:59789"/>
    </ligand>
</feature>
<feature type="binding site" evidence="1">
    <location>
        <position position="197"/>
    </location>
    <ligand>
        <name>S-adenosyl-L-methionine</name>
        <dbReference type="ChEBI" id="CHEBI:59789"/>
    </ligand>
</feature>
<feature type="binding site" evidence="1">
    <location>
        <begin position="219"/>
        <end position="221"/>
    </location>
    <ligand>
        <name>S-adenosyl-L-methionine</name>
        <dbReference type="ChEBI" id="CHEBI:59789"/>
    </ligand>
</feature>
<feature type="binding site" evidence="1">
    <location>
        <position position="301"/>
    </location>
    <ligand>
        <name>S-adenosyl-L-methionine</name>
        <dbReference type="ChEBI" id="CHEBI:59789"/>
    </ligand>
</feature>
<feature type="disulfide bond" description="(transient)" evidence="1">
    <location>
        <begin position="104"/>
        <end position="344"/>
    </location>
</feature>
<organism>
    <name type="scientific">Albidiferax ferrireducens (strain ATCC BAA-621 / DSM 15236 / T118)</name>
    <name type="common">Rhodoferax ferrireducens</name>
    <dbReference type="NCBI Taxonomy" id="338969"/>
    <lineage>
        <taxon>Bacteria</taxon>
        <taxon>Pseudomonadati</taxon>
        <taxon>Pseudomonadota</taxon>
        <taxon>Betaproteobacteria</taxon>
        <taxon>Burkholderiales</taxon>
        <taxon>Comamonadaceae</taxon>
        <taxon>Rhodoferax</taxon>
    </lineage>
</organism>